<name>Y105_BPT3</name>
<dbReference type="EMBL" id="X17255">
    <property type="protein sequence ID" value="CAA35122.1"/>
    <property type="molecule type" value="Genomic_DNA"/>
</dbReference>
<dbReference type="EMBL" id="X05031">
    <property type="protein sequence ID" value="CAA28697.1"/>
    <property type="molecule type" value="Genomic_DNA"/>
</dbReference>
<dbReference type="PIR" id="S09536">
    <property type="entry name" value="S09536"/>
</dbReference>
<dbReference type="RefSeq" id="NP_523302.1">
    <property type="nucleotide sequence ID" value="NC_003298.1"/>
</dbReference>
<dbReference type="KEGG" id="vg:927438"/>
<dbReference type="OrthoDB" id="18110at10239"/>
<protein>
    <recommendedName>
        <fullName>Uncharacterized gene 1.05 protein</fullName>
    </recommendedName>
</protein>
<feature type="chain" id="PRO_0000106466" description="Uncharacterized gene 1.05 protein">
    <location>
        <begin position="1"/>
        <end position="90"/>
    </location>
</feature>
<accession>P07715</accession>
<proteinExistence type="predicted"/>
<reference key="1">
    <citation type="journal article" date="1987" name="J. Mol. Biol.">
        <title>Sequence of a conditionally essential region of bacteriophage T3, including the primary origin of DNA replication.</title>
        <authorList>
            <person name="Schmitt M.P."/>
            <person name="Beck P.J."/>
            <person name="Kearney C.A."/>
            <person name="Spence J.L."/>
            <person name="Digiovanni D."/>
            <person name="Condreay J.P."/>
            <person name="Molineux I.J."/>
        </authorList>
    </citation>
    <scope>NUCLEOTIDE SEQUENCE [GENOMIC DNA]</scope>
    <source>
        <strain>Luria</strain>
    </source>
</reference>
<reference key="2">
    <citation type="journal article" date="1985" name="Nucleic Acids Res.">
        <title>Sequence and analysis of the gene for bacteriophage T3 RNA polymerase.</title>
        <authorList>
            <person name="McGraw N.J."/>
            <person name="Bailey J.N."/>
            <person name="Cleaves G.R."/>
            <person name="Dembinski D.R."/>
            <person name="Gocke C.R."/>
            <person name="Joliffe L.K."/>
            <person name="Macwright R.S."/>
            <person name="McAllister W.T."/>
        </authorList>
    </citation>
    <scope>NUCLEOTIDE SEQUENCE [GENOMIC DNA] OF 1-5</scope>
    <source>
        <strain>Hausmann</strain>
    </source>
</reference>
<sequence length="90" mass="10390">MINIKTFFKNIFKLNRLTSIKFYAWMPGSDDLRKTEFKLGLGPCGKVVTKLECYSTSSGMVIFQTTEDNEMKSFYYPKGSTCGRIERTYS</sequence>
<organismHost>
    <name type="scientific">Escherichia coli</name>
    <dbReference type="NCBI Taxonomy" id="562"/>
</organismHost>
<gene>
    <name type="primary">1.05</name>
</gene>
<organism>
    <name type="scientific">Enterobacteria phage T3</name>
    <name type="common">Bacteriophage T3</name>
    <dbReference type="NCBI Taxonomy" id="10759"/>
    <lineage>
        <taxon>Viruses</taxon>
        <taxon>Duplodnaviria</taxon>
        <taxon>Heunggongvirae</taxon>
        <taxon>Uroviricota</taxon>
        <taxon>Caudoviricetes</taxon>
        <taxon>Autographiviridae</taxon>
        <taxon>Studiervirinae</taxon>
        <taxon>Teetrevirus</taxon>
        <taxon>Teetrevirus T3</taxon>
    </lineage>
</organism>